<comment type="function">
    <text evidence="1">Catalyzes the oxidation 4-aminobutanal (gamma-aminobutyraldehyde) to 4-aminobutanoate (gamma-aminobutyrate or GABA). This is the second step in one of two pathways for putrescine degradation, where putrescine is converted into 4-aminobutanoate via 4-aminobutanal. Also functions as a 5-aminopentanal dehydrogenase in a a L-lysine degradation pathway to succinate that proceeds via cadaverine, glutarate and L-2-hydroxyglutarate.</text>
</comment>
<comment type="catalytic activity">
    <reaction evidence="1">
        <text>4-aminobutanal + NAD(+) + H2O = 4-aminobutanoate + NADH + 2 H(+)</text>
        <dbReference type="Rhea" id="RHEA:19105"/>
        <dbReference type="ChEBI" id="CHEBI:15377"/>
        <dbReference type="ChEBI" id="CHEBI:15378"/>
        <dbReference type="ChEBI" id="CHEBI:57540"/>
        <dbReference type="ChEBI" id="CHEBI:57945"/>
        <dbReference type="ChEBI" id="CHEBI:58264"/>
        <dbReference type="ChEBI" id="CHEBI:59888"/>
        <dbReference type="EC" id="1.2.1.19"/>
    </reaction>
    <physiologicalReaction direction="left-to-right" evidence="1">
        <dbReference type="Rhea" id="RHEA:19106"/>
    </physiologicalReaction>
</comment>
<comment type="catalytic activity">
    <reaction evidence="1">
        <text>5-aminopentanal + NAD(+) + H2O = 5-aminopentanoate + NADH + 2 H(+)</text>
        <dbReference type="Rhea" id="RHEA:61632"/>
        <dbReference type="ChEBI" id="CHEBI:15377"/>
        <dbReference type="ChEBI" id="CHEBI:15378"/>
        <dbReference type="ChEBI" id="CHEBI:57540"/>
        <dbReference type="ChEBI" id="CHEBI:57945"/>
        <dbReference type="ChEBI" id="CHEBI:144896"/>
        <dbReference type="ChEBI" id="CHEBI:356010"/>
    </reaction>
    <physiologicalReaction direction="left-to-right" evidence="1">
        <dbReference type="Rhea" id="RHEA:61633"/>
    </physiologicalReaction>
</comment>
<comment type="pathway">
    <text evidence="1">Amine and polyamine degradation; putrescine degradation; 4-aminobutanoate from 4-aminobutanal: step 1/1.</text>
</comment>
<comment type="pathway">
    <text evidence="1">Amino-acid degradation.</text>
</comment>
<comment type="subunit">
    <text evidence="1">Homotetramer.</text>
</comment>
<comment type="miscellaneous">
    <text evidence="1">4-aminobutanal can spontaneously cyclize to 1-pyrroline, and 5-aminopentanal to 1-piperideine.</text>
</comment>
<comment type="similarity">
    <text evidence="1">Belongs to the aldehyde dehydrogenase family. Gamma-aminobutyraldehyde dehydrogenase subfamily.</text>
</comment>
<proteinExistence type="inferred from homology"/>
<feature type="chain" id="PRO_1000214197" description="Gamma-aminobutyraldehyde dehydrogenase">
    <location>
        <begin position="1"/>
        <end position="474"/>
    </location>
</feature>
<feature type="active site" evidence="1">
    <location>
        <position position="246"/>
    </location>
</feature>
<feature type="active site" description="Nucleophile" evidence="1">
    <location>
        <position position="280"/>
    </location>
</feature>
<feature type="binding site" evidence="1">
    <location>
        <begin position="146"/>
        <end position="148"/>
    </location>
    <ligand>
        <name>NAD(+)</name>
        <dbReference type="ChEBI" id="CHEBI:57540"/>
    </ligand>
</feature>
<feature type="binding site" evidence="1">
    <location>
        <begin position="172"/>
        <end position="175"/>
    </location>
    <ligand>
        <name>NAD(+)</name>
        <dbReference type="ChEBI" id="CHEBI:57540"/>
    </ligand>
</feature>
<feature type="binding site" evidence="1">
    <location>
        <position position="209"/>
    </location>
    <ligand>
        <name>NAD(+)</name>
        <dbReference type="ChEBI" id="CHEBI:57540"/>
    </ligand>
</feature>
<feature type="binding site" evidence="1">
    <location>
        <begin position="225"/>
        <end position="228"/>
    </location>
    <ligand>
        <name>NAD(+)</name>
        <dbReference type="ChEBI" id="CHEBI:57540"/>
    </ligand>
</feature>
<feature type="binding site" evidence="1">
    <location>
        <position position="280"/>
    </location>
    <ligand>
        <name>NAD(+)</name>
        <dbReference type="ChEBI" id="CHEBI:57540"/>
    </ligand>
</feature>
<protein>
    <recommendedName>
        <fullName evidence="1">Gamma-aminobutyraldehyde dehydrogenase</fullName>
        <shortName evidence="1">ABALDH</shortName>
        <ecNumber evidence="1">1.2.1.19</ecNumber>
    </recommendedName>
    <alternativeName>
        <fullName evidence="1">1-pyrroline dehydrogenase</fullName>
    </alternativeName>
    <alternativeName>
        <fullName evidence="1">4-aminobutanal dehydrogenase</fullName>
    </alternativeName>
    <alternativeName>
        <fullName evidence="1">5-aminopentanal dehydrogenase</fullName>
        <ecNumber evidence="1">1.2.1.-</ecNumber>
    </alternativeName>
</protein>
<organism>
    <name type="scientific">Pectobacterium carotovorum subsp. carotovorum (strain PC1)</name>
    <dbReference type="NCBI Taxonomy" id="561230"/>
    <lineage>
        <taxon>Bacteria</taxon>
        <taxon>Pseudomonadati</taxon>
        <taxon>Pseudomonadota</taxon>
        <taxon>Gammaproteobacteria</taxon>
        <taxon>Enterobacterales</taxon>
        <taxon>Pectobacteriaceae</taxon>
        <taxon>Pectobacterium</taxon>
    </lineage>
</organism>
<name>ABDH_PECCP</name>
<dbReference type="EC" id="1.2.1.19" evidence="1"/>
<dbReference type="EC" id="1.2.1.-" evidence="1"/>
<dbReference type="EMBL" id="CP001657">
    <property type="protein sequence ID" value="ACT12461.1"/>
    <property type="molecule type" value="Genomic_DNA"/>
</dbReference>
<dbReference type="RefSeq" id="WP_015839687.1">
    <property type="nucleotide sequence ID" value="NC_012917.1"/>
</dbReference>
<dbReference type="SMR" id="C6DD82"/>
<dbReference type="STRING" id="561230.PC1_1415"/>
<dbReference type="KEGG" id="pct:PC1_1415"/>
<dbReference type="eggNOG" id="COG1012">
    <property type="taxonomic scope" value="Bacteria"/>
</dbReference>
<dbReference type="HOGENOM" id="CLU_005391_0_2_6"/>
<dbReference type="OrthoDB" id="9812625at2"/>
<dbReference type="UniPathway" id="UPA00188">
    <property type="reaction ID" value="UER00292"/>
</dbReference>
<dbReference type="Proteomes" id="UP000002736">
    <property type="component" value="Chromosome"/>
</dbReference>
<dbReference type="GO" id="GO:0019145">
    <property type="term" value="F:aminobutyraldehyde dehydrogenase (NAD+) activity"/>
    <property type="evidence" value="ECO:0007669"/>
    <property type="project" value="UniProtKB-UniRule"/>
</dbReference>
<dbReference type="GO" id="GO:0051287">
    <property type="term" value="F:NAD binding"/>
    <property type="evidence" value="ECO:0007669"/>
    <property type="project" value="UniProtKB-UniRule"/>
</dbReference>
<dbReference type="GO" id="GO:0019477">
    <property type="term" value="P:L-lysine catabolic process"/>
    <property type="evidence" value="ECO:0007669"/>
    <property type="project" value="UniProtKB-UniRule"/>
</dbReference>
<dbReference type="GO" id="GO:0009447">
    <property type="term" value="P:putrescine catabolic process"/>
    <property type="evidence" value="ECO:0007669"/>
    <property type="project" value="UniProtKB-UniRule"/>
</dbReference>
<dbReference type="CDD" id="cd07092">
    <property type="entry name" value="ALDH_ABALDH-YdcW"/>
    <property type="match status" value="1"/>
</dbReference>
<dbReference type="FunFam" id="3.40.605.10:FF:000001">
    <property type="entry name" value="Aldehyde dehydrogenase 1"/>
    <property type="match status" value="1"/>
</dbReference>
<dbReference type="FunFam" id="3.40.309.10:FF:000010">
    <property type="entry name" value="Gamma-aminobutyraldehyde dehydrogenase"/>
    <property type="match status" value="1"/>
</dbReference>
<dbReference type="Gene3D" id="3.40.605.10">
    <property type="entry name" value="Aldehyde Dehydrogenase, Chain A, domain 1"/>
    <property type="match status" value="1"/>
</dbReference>
<dbReference type="Gene3D" id="3.40.309.10">
    <property type="entry name" value="Aldehyde Dehydrogenase, Chain A, domain 2"/>
    <property type="match status" value="1"/>
</dbReference>
<dbReference type="HAMAP" id="MF_01275">
    <property type="entry name" value="Aldedh_Prr"/>
    <property type="match status" value="1"/>
</dbReference>
<dbReference type="InterPro" id="IPR016161">
    <property type="entry name" value="Ald_DH/histidinol_DH"/>
</dbReference>
<dbReference type="InterPro" id="IPR016163">
    <property type="entry name" value="Ald_DH_C"/>
</dbReference>
<dbReference type="InterPro" id="IPR029510">
    <property type="entry name" value="Ald_DH_CS_GLU"/>
</dbReference>
<dbReference type="InterPro" id="IPR016162">
    <property type="entry name" value="Ald_DH_N"/>
</dbReference>
<dbReference type="InterPro" id="IPR015590">
    <property type="entry name" value="Aldehyde_DH_dom"/>
</dbReference>
<dbReference type="InterPro" id="IPR015657">
    <property type="entry name" value="Aminobutyraldehyde_DH"/>
</dbReference>
<dbReference type="InterPro" id="IPR017749">
    <property type="entry name" value="PatD"/>
</dbReference>
<dbReference type="NCBIfam" id="TIGR03374">
    <property type="entry name" value="ABALDH"/>
    <property type="match status" value="1"/>
</dbReference>
<dbReference type="NCBIfam" id="NF010000">
    <property type="entry name" value="PRK13473.1"/>
    <property type="match status" value="1"/>
</dbReference>
<dbReference type="PANTHER" id="PTHR11699">
    <property type="entry name" value="ALDEHYDE DEHYDROGENASE-RELATED"/>
    <property type="match status" value="1"/>
</dbReference>
<dbReference type="Pfam" id="PF00171">
    <property type="entry name" value="Aldedh"/>
    <property type="match status" value="1"/>
</dbReference>
<dbReference type="SUPFAM" id="SSF53720">
    <property type="entry name" value="ALDH-like"/>
    <property type="match status" value="1"/>
</dbReference>
<dbReference type="PROSITE" id="PS00687">
    <property type="entry name" value="ALDEHYDE_DEHYDR_GLU"/>
    <property type="match status" value="1"/>
</dbReference>
<keyword id="KW-0520">NAD</keyword>
<keyword id="KW-0560">Oxidoreductase</keyword>
<reference key="1">
    <citation type="submission" date="2009-07" db="EMBL/GenBank/DDBJ databases">
        <title>Complete sequence of Pectobacterium carotovorum subsp. carotovorum PC1.</title>
        <authorList>
            <consortium name="US DOE Joint Genome Institute"/>
            <person name="Lucas S."/>
            <person name="Copeland A."/>
            <person name="Lapidus A."/>
            <person name="Glavina del Rio T."/>
            <person name="Tice H."/>
            <person name="Bruce D."/>
            <person name="Goodwin L."/>
            <person name="Pitluck S."/>
            <person name="Munk A.C."/>
            <person name="Brettin T."/>
            <person name="Detter J.C."/>
            <person name="Han C."/>
            <person name="Tapia R."/>
            <person name="Larimer F."/>
            <person name="Land M."/>
            <person name="Hauser L."/>
            <person name="Kyrpides N."/>
            <person name="Mikhailova N."/>
            <person name="Balakrishnan V."/>
            <person name="Glasner J."/>
            <person name="Perna N.T."/>
        </authorList>
    </citation>
    <scope>NUCLEOTIDE SEQUENCE [LARGE SCALE GENOMIC DNA]</scope>
    <source>
        <strain>PC1</strain>
    </source>
</reference>
<evidence type="ECO:0000255" key="1">
    <source>
        <dbReference type="HAMAP-Rule" id="MF_01275"/>
    </source>
</evidence>
<sequence>MHDKLLIEGKLVAGKGEALAVFNPATGEQIAAIAQADLHQVDAAVLAAESAFAHWGQTTPKTRATLLLQIADAIEENAEAFARLESLNCGKPYHAALNDEVPAVADVFRFFAGAARCLSGSAAGEYLEGHTSMIRRDPVGVVASIAPWNYPLMMASWKLAPALAAGNCVVLKPAEQTPLTTFYLAHLLAEILPAGVVNIVFGRGADIGDALTGHEKVNMVSLTGSIATGAHILSHTASSVKRTHMELGGKAPVIVFDDADIDQVVDGIRSFGFYNAGQDCTAACRLYVQRAVYDKVVEALGNAVATLKMGDPHDETTELGPLITEQQLERVVGFVERAKALPHITVVTGGERVKGQGFYFQPTVLAGAKQEDEIVQKEVFGPVISITPFDDEAQVIGWANASHYGLASSVWTRDIGRAHRLAACLQYGCTWVNTHFMLVSEMPHGGQKLSGYGKDMSMYGLEDYTIVRHIMIRH</sequence>
<accession>C6DD82</accession>
<gene>
    <name evidence="1" type="primary">patD</name>
    <name type="ordered locus">PC1_1415</name>
</gene>